<protein>
    <recommendedName>
        <fullName evidence="1">DNA-directed RNA polymerase subunit alpha</fullName>
        <shortName evidence="1">RNAP subunit alpha</shortName>
        <ecNumber evidence="1">2.7.7.6</ecNumber>
    </recommendedName>
    <alternativeName>
        <fullName evidence="1">RNA polymerase subunit alpha</fullName>
    </alternativeName>
    <alternativeName>
        <fullName evidence="1">Transcriptase subunit alpha</fullName>
    </alternativeName>
</protein>
<proteinExistence type="inferred from homology"/>
<name>RPOA_METNO</name>
<comment type="function">
    <text evidence="1">DNA-dependent RNA polymerase catalyzes the transcription of DNA into RNA using the four ribonucleoside triphosphates as substrates.</text>
</comment>
<comment type="catalytic activity">
    <reaction evidence="1">
        <text>RNA(n) + a ribonucleoside 5'-triphosphate = RNA(n+1) + diphosphate</text>
        <dbReference type="Rhea" id="RHEA:21248"/>
        <dbReference type="Rhea" id="RHEA-COMP:14527"/>
        <dbReference type="Rhea" id="RHEA-COMP:17342"/>
        <dbReference type="ChEBI" id="CHEBI:33019"/>
        <dbReference type="ChEBI" id="CHEBI:61557"/>
        <dbReference type="ChEBI" id="CHEBI:140395"/>
        <dbReference type="EC" id="2.7.7.6"/>
    </reaction>
</comment>
<comment type="subunit">
    <text evidence="1">Homodimer. The RNAP catalytic core consists of 2 alpha, 1 beta, 1 beta' and 1 omega subunit. When a sigma factor is associated with the core the holoenzyme is formed, which can initiate transcription.</text>
</comment>
<comment type="domain">
    <text evidence="1">The N-terminal domain is essential for RNAP assembly and basal transcription, whereas the C-terminal domain is involved in interaction with transcriptional regulators and with upstream promoter elements.</text>
</comment>
<comment type="similarity">
    <text evidence="1">Belongs to the RNA polymerase alpha chain family.</text>
</comment>
<sequence>MVIQKNWQELIKPNKLEVAPGHDPKRIATVVAEPLERGFGTTLGNALRRVLLSSLQGAAVTSVHIDGVLHEFSSIPGVREDVTDIVLNIKTIAIRSSSDTPKRMTLRKTGPGLVTAGDISTIGDIQILNPDLVLCTLDEGAEIRMEFTVATGKGYVPADRNRPEDAPIGLIPVDALFSPVTKVSYRIENTREGQDLDKDKLTMTVETNGAVSPEDALAYAARIIQDQLQIFVNFEEPRKEEAAPLAPQLPFNPALLKKVDELELSVRSANCLKNDNIVYIGDLIQKTEAEMLRTPNFGRKSLNEIKEVLAAMGLHLGMDVPGWPPENIEDLAKRFEEHY</sequence>
<dbReference type="EC" id="2.7.7.6" evidence="1"/>
<dbReference type="EMBL" id="CP001349">
    <property type="protein sequence ID" value="ACL56921.1"/>
    <property type="molecule type" value="Genomic_DNA"/>
</dbReference>
<dbReference type="RefSeq" id="WP_015928610.1">
    <property type="nucleotide sequence ID" value="NC_011894.1"/>
</dbReference>
<dbReference type="SMR" id="B8IT35"/>
<dbReference type="STRING" id="460265.Mnod_1932"/>
<dbReference type="KEGG" id="mno:Mnod_1932"/>
<dbReference type="eggNOG" id="COG0202">
    <property type="taxonomic scope" value="Bacteria"/>
</dbReference>
<dbReference type="HOGENOM" id="CLU_053084_0_0_5"/>
<dbReference type="OrthoDB" id="9805706at2"/>
<dbReference type="Proteomes" id="UP000008207">
    <property type="component" value="Chromosome"/>
</dbReference>
<dbReference type="GO" id="GO:0005737">
    <property type="term" value="C:cytoplasm"/>
    <property type="evidence" value="ECO:0007669"/>
    <property type="project" value="UniProtKB-ARBA"/>
</dbReference>
<dbReference type="GO" id="GO:0000428">
    <property type="term" value="C:DNA-directed RNA polymerase complex"/>
    <property type="evidence" value="ECO:0007669"/>
    <property type="project" value="UniProtKB-KW"/>
</dbReference>
<dbReference type="GO" id="GO:0003677">
    <property type="term" value="F:DNA binding"/>
    <property type="evidence" value="ECO:0007669"/>
    <property type="project" value="UniProtKB-UniRule"/>
</dbReference>
<dbReference type="GO" id="GO:0003899">
    <property type="term" value="F:DNA-directed RNA polymerase activity"/>
    <property type="evidence" value="ECO:0007669"/>
    <property type="project" value="UniProtKB-UniRule"/>
</dbReference>
<dbReference type="GO" id="GO:0046983">
    <property type="term" value="F:protein dimerization activity"/>
    <property type="evidence" value="ECO:0007669"/>
    <property type="project" value="InterPro"/>
</dbReference>
<dbReference type="GO" id="GO:0006351">
    <property type="term" value="P:DNA-templated transcription"/>
    <property type="evidence" value="ECO:0007669"/>
    <property type="project" value="UniProtKB-UniRule"/>
</dbReference>
<dbReference type="CDD" id="cd06928">
    <property type="entry name" value="RNAP_alpha_NTD"/>
    <property type="match status" value="1"/>
</dbReference>
<dbReference type="FunFam" id="1.10.150.20:FF:000001">
    <property type="entry name" value="DNA-directed RNA polymerase subunit alpha"/>
    <property type="match status" value="1"/>
</dbReference>
<dbReference type="FunFam" id="2.170.120.12:FF:000001">
    <property type="entry name" value="DNA-directed RNA polymerase subunit alpha"/>
    <property type="match status" value="1"/>
</dbReference>
<dbReference type="Gene3D" id="1.10.150.20">
    <property type="entry name" value="5' to 3' exonuclease, C-terminal subdomain"/>
    <property type="match status" value="1"/>
</dbReference>
<dbReference type="Gene3D" id="2.170.120.12">
    <property type="entry name" value="DNA-directed RNA polymerase, insert domain"/>
    <property type="match status" value="1"/>
</dbReference>
<dbReference type="Gene3D" id="3.30.1360.10">
    <property type="entry name" value="RNA polymerase, RBP11-like subunit"/>
    <property type="match status" value="1"/>
</dbReference>
<dbReference type="HAMAP" id="MF_00059">
    <property type="entry name" value="RNApol_bact_RpoA"/>
    <property type="match status" value="1"/>
</dbReference>
<dbReference type="InterPro" id="IPR011262">
    <property type="entry name" value="DNA-dir_RNA_pol_insert"/>
</dbReference>
<dbReference type="InterPro" id="IPR011263">
    <property type="entry name" value="DNA-dir_RNA_pol_RpoA/D/Rpb3"/>
</dbReference>
<dbReference type="InterPro" id="IPR011773">
    <property type="entry name" value="DNA-dir_RpoA"/>
</dbReference>
<dbReference type="InterPro" id="IPR036603">
    <property type="entry name" value="RBP11-like"/>
</dbReference>
<dbReference type="InterPro" id="IPR011260">
    <property type="entry name" value="RNAP_asu_C"/>
</dbReference>
<dbReference type="InterPro" id="IPR036643">
    <property type="entry name" value="RNApol_insert_sf"/>
</dbReference>
<dbReference type="NCBIfam" id="NF003513">
    <property type="entry name" value="PRK05182.1-2"/>
    <property type="match status" value="1"/>
</dbReference>
<dbReference type="NCBIfam" id="NF003519">
    <property type="entry name" value="PRK05182.2-5"/>
    <property type="match status" value="1"/>
</dbReference>
<dbReference type="NCBIfam" id="TIGR02027">
    <property type="entry name" value="rpoA"/>
    <property type="match status" value="1"/>
</dbReference>
<dbReference type="Pfam" id="PF01000">
    <property type="entry name" value="RNA_pol_A_bac"/>
    <property type="match status" value="1"/>
</dbReference>
<dbReference type="Pfam" id="PF03118">
    <property type="entry name" value="RNA_pol_A_CTD"/>
    <property type="match status" value="1"/>
</dbReference>
<dbReference type="Pfam" id="PF01193">
    <property type="entry name" value="RNA_pol_L"/>
    <property type="match status" value="1"/>
</dbReference>
<dbReference type="SMART" id="SM00662">
    <property type="entry name" value="RPOLD"/>
    <property type="match status" value="1"/>
</dbReference>
<dbReference type="SUPFAM" id="SSF47789">
    <property type="entry name" value="C-terminal domain of RNA polymerase alpha subunit"/>
    <property type="match status" value="1"/>
</dbReference>
<dbReference type="SUPFAM" id="SSF56553">
    <property type="entry name" value="Insert subdomain of RNA polymerase alpha subunit"/>
    <property type="match status" value="1"/>
</dbReference>
<dbReference type="SUPFAM" id="SSF55257">
    <property type="entry name" value="RBP11-like subunits of RNA polymerase"/>
    <property type="match status" value="1"/>
</dbReference>
<feature type="chain" id="PRO_1000196641" description="DNA-directed RNA polymerase subunit alpha">
    <location>
        <begin position="1"/>
        <end position="339"/>
    </location>
</feature>
<feature type="region of interest" description="Alpha N-terminal domain (alpha-NTD)" evidence="1">
    <location>
        <begin position="1"/>
        <end position="235"/>
    </location>
</feature>
<feature type="region of interest" description="Alpha C-terminal domain (alpha-CTD)" evidence="1">
    <location>
        <begin position="251"/>
        <end position="339"/>
    </location>
</feature>
<accession>B8IT35</accession>
<gene>
    <name evidence="1" type="primary">rpoA</name>
    <name type="ordered locus">Mnod_1932</name>
</gene>
<reference key="1">
    <citation type="submission" date="2009-01" db="EMBL/GenBank/DDBJ databases">
        <title>Complete sequence of chromosome of Methylobacterium nodulans ORS 2060.</title>
        <authorList>
            <consortium name="US DOE Joint Genome Institute"/>
            <person name="Lucas S."/>
            <person name="Copeland A."/>
            <person name="Lapidus A."/>
            <person name="Glavina del Rio T."/>
            <person name="Dalin E."/>
            <person name="Tice H."/>
            <person name="Bruce D."/>
            <person name="Goodwin L."/>
            <person name="Pitluck S."/>
            <person name="Sims D."/>
            <person name="Brettin T."/>
            <person name="Detter J.C."/>
            <person name="Han C."/>
            <person name="Larimer F."/>
            <person name="Land M."/>
            <person name="Hauser L."/>
            <person name="Kyrpides N."/>
            <person name="Ivanova N."/>
            <person name="Marx C.J."/>
            <person name="Richardson P."/>
        </authorList>
    </citation>
    <scope>NUCLEOTIDE SEQUENCE [LARGE SCALE GENOMIC DNA]</scope>
    <source>
        <strain>LMG 21967 / CNCM I-2342 / ORS 2060</strain>
    </source>
</reference>
<evidence type="ECO:0000255" key="1">
    <source>
        <dbReference type="HAMAP-Rule" id="MF_00059"/>
    </source>
</evidence>
<organism>
    <name type="scientific">Methylobacterium nodulans (strain LMG 21967 / CNCM I-2342 / ORS 2060)</name>
    <dbReference type="NCBI Taxonomy" id="460265"/>
    <lineage>
        <taxon>Bacteria</taxon>
        <taxon>Pseudomonadati</taxon>
        <taxon>Pseudomonadota</taxon>
        <taxon>Alphaproteobacteria</taxon>
        <taxon>Hyphomicrobiales</taxon>
        <taxon>Methylobacteriaceae</taxon>
        <taxon>Methylobacterium</taxon>
    </lineage>
</organism>
<keyword id="KW-0240">DNA-directed RNA polymerase</keyword>
<keyword id="KW-0548">Nucleotidyltransferase</keyword>
<keyword id="KW-1185">Reference proteome</keyword>
<keyword id="KW-0804">Transcription</keyword>
<keyword id="KW-0808">Transferase</keyword>